<protein>
    <recommendedName>
        <fullName>F-box only protein 17</fullName>
    </recommendedName>
    <alternativeName>
        <fullName>F-box only protein 26</fullName>
    </alternativeName>
</protein>
<sequence length="278" mass="31479">MGARLSRRRLPADPSLALDALPPELLVQVLSHVPPRSLVTRCRPVCRAWRDIVDGPTVWLLQLARDRSAEGRALYAVAQRCLPSNEDKEEFPLCALARYCLRAPFGRNLIFNSCGEQGFRGWEVEHGGNGWAIEKNLTPVPGAPSQTCFVTSFEWCSKRQLVDLVMEGVWQELLDSAQIEICVADWWGARENCGCVYQLRVRLLDVYEKEVVKFSASPDPVLQWTERGCRQVSHVFTNFGKGIRYVSFEQYGRDVSSWVGHYGALVTHSSVRVRIRLS</sequence>
<name>FBX17_HUMAN</name>
<gene>
    <name type="primary">FBXO17</name>
    <name type="synonym">FBG4</name>
    <name type="synonym">FBX17</name>
    <name type="synonym">FBX26</name>
    <name type="synonym">FBXO26</name>
</gene>
<feature type="chain" id="PRO_0000119898" description="F-box only protein 17">
    <location>
        <begin position="1"/>
        <end position="278"/>
    </location>
</feature>
<feature type="domain" description="F-box" evidence="1">
    <location>
        <begin position="15"/>
        <end position="62"/>
    </location>
</feature>
<feature type="domain" description="FBA" evidence="2">
    <location>
        <begin position="99"/>
        <end position="275"/>
    </location>
</feature>
<feature type="mutagenesis site" description="Reduces interaction with glycosylated concanavalin-A in vitro." evidence="4">
    <original>SW</original>
    <variation>AA</variation>
    <location>
        <begin position="257"/>
        <end position="258"/>
    </location>
</feature>
<dbReference type="EMBL" id="AF386743">
    <property type="protein sequence ID" value="AAL37625.1"/>
    <property type="molecule type" value="mRNA"/>
</dbReference>
<dbReference type="EMBL" id="AK057934">
    <property type="protein sequence ID" value="BAB71616.1"/>
    <property type="status" value="ALT_INIT"/>
    <property type="molecule type" value="mRNA"/>
</dbReference>
<dbReference type="EMBL" id="BC012385">
    <property type="protein sequence ID" value="AAH12385.1"/>
    <property type="molecule type" value="mRNA"/>
</dbReference>
<dbReference type="CCDS" id="CCDS12526.1"/>
<dbReference type="RefSeq" id="NP_079183.4">
    <property type="nucleotide sequence ID" value="NM_024907.6"/>
</dbReference>
<dbReference type="RefSeq" id="NP_680474.1">
    <property type="nucleotide sequence ID" value="NM_148169.2"/>
</dbReference>
<dbReference type="SMR" id="Q96EF6"/>
<dbReference type="BioGRID" id="125424">
    <property type="interactions" value="61"/>
</dbReference>
<dbReference type="ComplexPortal" id="CPX-7927">
    <property type="entry name" value="SCF E3 ubiquitin ligase complex, FBXO17 variant"/>
</dbReference>
<dbReference type="CORUM" id="Q96EF6"/>
<dbReference type="FunCoup" id="Q96EF6">
    <property type="interactions" value="174"/>
</dbReference>
<dbReference type="IntAct" id="Q96EF6">
    <property type="interactions" value="48"/>
</dbReference>
<dbReference type="MINT" id="Q96EF6"/>
<dbReference type="STRING" id="9606.ENSP00000292852"/>
<dbReference type="BioMuta" id="FBXO17"/>
<dbReference type="DMDM" id="21263617"/>
<dbReference type="jPOST" id="Q96EF6"/>
<dbReference type="MassIVE" id="Q96EF6"/>
<dbReference type="PaxDb" id="9606-ENSP00000292852"/>
<dbReference type="PeptideAtlas" id="Q96EF6"/>
<dbReference type="ProteomicsDB" id="76403"/>
<dbReference type="Pumba" id="Q96EF6"/>
<dbReference type="Antibodypedia" id="68422">
    <property type="antibodies" value="54 antibodies from 18 providers"/>
</dbReference>
<dbReference type="DNASU" id="115290"/>
<dbReference type="Ensembl" id="ENST00000292852.9">
    <property type="protein sequence ID" value="ENSP00000292852.3"/>
    <property type="gene ID" value="ENSG00000269190.6"/>
</dbReference>
<dbReference type="Ensembl" id="ENST00000595329.5">
    <property type="protein sequence ID" value="ENSP00000470361.1"/>
    <property type="gene ID" value="ENSG00000269190.6"/>
</dbReference>
<dbReference type="Ensembl" id="ENST00000634982.2">
    <property type="protein sequence ID" value="ENSP00000488997.1"/>
    <property type="gene ID" value="ENSG00000282954.2"/>
</dbReference>
<dbReference type="Ensembl" id="ENST00000635115.1">
    <property type="protein sequence ID" value="ENSP00000489327.1"/>
    <property type="gene ID" value="ENSG00000282954.2"/>
</dbReference>
<dbReference type="GeneID" id="115290"/>
<dbReference type="KEGG" id="hsa:115290"/>
<dbReference type="MANE-Select" id="ENST00000292852.9">
    <property type="protein sequence ID" value="ENSP00000292852.3"/>
    <property type="RefSeq nucleotide sequence ID" value="NM_024907.7"/>
    <property type="RefSeq protein sequence ID" value="NP_079183.4"/>
</dbReference>
<dbReference type="UCSC" id="uc002okg.3">
    <property type="organism name" value="human"/>
</dbReference>
<dbReference type="AGR" id="HGNC:18754"/>
<dbReference type="CTD" id="115290"/>
<dbReference type="DisGeNET" id="115290"/>
<dbReference type="GeneCards" id="FBXO17"/>
<dbReference type="HGNC" id="HGNC:18754">
    <property type="gene designation" value="FBXO17"/>
</dbReference>
<dbReference type="HPA" id="ENSG00000269190">
    <property type="expression patterns" value="Tissue enhanced (liver)"/>
</dbReference>
<dbReference type="MIM" id="609094">
    <property type="type" value="gene"/>
</dbReference>
<dbReference type="neXtProt" id="NX_Q96EF6"/>
<dbReference type="OpenTargets" id="ENSG00000269190"/>
<dbReference type="PharmGKB" id="PA38676"/>
<dbReference type="VEuPathDB" id="HostDB:ENSG00000269190"/>
<dbReference type="eggNOG" id="ENOG502RZA6">
    <property type="taxonomic scope" value="Eukaryota"/>
</dbReference>
<dbReference type="GeneTree" id="ENSGT00940000162455"/>
<dbReference type="HOGENOM" id="CLU_068548_0_0_1"/>
<dbReference type="InParanoid" id="Q96EF6"/>
<dbReference type="OMA" id="EEEFPLC"/>
<dbReference type="OrthoDB" id="1107553at2759"/>
<dbReference type="PAN-GO" id="Q96EF6">
    <property type="GO annotations" value="6 GO annotations based on evolutionary models"/>
</dbReference>
<dbReference type="PhylomeDB" id="Q96EF6"/>
<dbReference type="PathwayCommons" id="Q96EF6"/>
<dbReference type="Reactome" id="R-HSA-8951664">
    <property type="pathway name" value="Neddylation"/>
</dbReference>
<dbReference type="Reactome" id="R-HSA-983168">
    <property type="pathway name" value="Antigen processing: Ubiquitination &amp; Proteasome degradation"/>
</dbReference>
<dbReference type="SignaLink" id="Q96EF6"/>
<dbReference type="BioGRID-ORCS" id="115290">
    <property type="hits" value="16 hits in 1193 CRISPR screens"/>
</dbReference>
<dbReference type="GenomeRNAi" id="115290"/>
<dbReference type="Pharos" id="Q96EF6">
    <property type="development level" value="Tbio"/>
</dbReference>
<dbReference type="PRO" id="PR:Q96EF6"/>
<dbReference type="Proteomes" id="UP000005640">
    <property type="component" value="Chromosome 19"/>
</dbReference>
<dbReference type="RNAct" id="Q96EF6">
    <property type="molecule type" value="protein"/>
</dbReference>
<dbReference type="Bgee" id="ENSG00000269190">
    <property type="expression patterns" value="Expressed in right lobe of liver and 97 other cell types or tissues"/>
</dbReference>
<dbReference type="ExpressionAtlas" id="Q96EF6">
    <property type="expression patterns" value="baseline and differential"/>
</dbReference>
<dbReference type="GO" id="GO:0005737">
    <property type="term" value="C:cytoplasm"/>
    <property type="evidence" value="ECO:0000318"/>
    <property type="project" value="GO_Central"/>
</dbReference>
<dbReference type="GO" id="GO:0005829">
    <property type="term" value="C:cytosol"/>
    <property type="evidence" value="ECO:0000304"/>
    <property type="project" value="Reactome"/>
</dbReference>
<dbReference type="GO" id="GO:0019005">
    <property type="term" value="C:SCF ubiquitin ligase complex"/>
    <property type="evidence" value="ECO:0000314"/>
    <property type="project" value="UniProtKB"/>
</dbReference>
<dbReference type="GO" id="GO:0036503">
    <property type="term" value="P:ERAD pathway"/>
    <property type="evidence" value="ECO:0000318"/>
    <property type="project" value="GO_Central"/>
</dbReference>
<dbReference type="GO" id="GO:0006516">
    <property type="term" value="P:glycoprotein catabolic process"/>
    <property type="evidence" value="ECO:0000318"/>
    <property type="project" value="GO_Central"/>
</dbReference>
<dbReference type="GO" id="GO:0031146">
    <property type="term" value="P:SCF-dependent proteasomal ubiquitin-dependent protein catabolic process"/>
    <property type="evidence" value="ECO:0000318"/>
    <property type="project" value="GO_Central"/>
</dbReference>
<dbReference type="CDD" id="cd22169">
    <property type="entry name" value="F-box_FBXO17-like"/>
    <property type="match status" value="1"/>
</dbReference>
<dbReference type="FunFam" id="2.60.120.260:FF:000012">
    <property type="entry name" value="F-box only protein 2"/>
    <property type="match status" value="1"/>
</dbReference>
<dbReference type="FunFam" id="1.20.1280.50:FF:000002">
    <property type="entry name" value="F-box only protein 44"/>
    <property type="match status" value="1"/>
</dbReference>
<dbReference type="Gene3D" id="1.20.1280.50">
    <property type="match status" value="1"/>
</dbReference>
<dbReference type="Gene3D" id="2.60.120.260">
    <property type="entry name" value="Galactose-binding domain-like"/>
    <property type="match status" value="1"/>
</dbReference>
<dbReference type="InterPro" id="IPR007397">
    <property type="entry name" value="F-box-assoc_dom"/>
</dbReference>
<dbReference type="InterPro" id="IPR036047">
    <property type="entry name" value="F-box-like_dom_sf"/>
</dbReference>
<dbReference type="InterPro" id="IPR001810">
    <property type="entry name" value="F-box_dom"/>
</dbReference>
<dbReference type="InterPro" id="IPR039752">
    <property type="entry name" value="F-box_only"/>
</dbReference>
<dbReference type="InterPro" id="IPR008979">
    <property type="entry name" value="Galactose-bd-like_sf"/>
</dbReference>
<dbReference type="PANTHER" id="PTHR12125:SF7">
    <property type="entry name" value="F-BOX ONLY PROTEIN 17"/>
    <property type="match status" value="1"/>
</dbReference>
<dbReference type="PANTHER" id="PTHR12125">
    <property type="entry name" value="F-BOX ONLY PROTEIN 6-LIKE PROTEIN"/>
    <property type="match status" value="1"/>
</dbReference>
<dbReference type="Pfam" id="PF12937">
    <property type="entry name" value="F-box-like"/>
    <property type="match status" value="1"/>
</dbReference>
<dbReference type="Pfam" id="PF04300">
    <property type="entry name" value="FBA"/>
    <property type="match status" value="1"/>
</dbReference>
<dbReference type="SMART" id="SM01198">
    <property type="entry name" value="FBA"/>
    <property type="match status" value="1"/>
</dbReference>
<dbReference type="SMART" id="SM00256">
    <property type="entry name" value="FBOX"/>
    <property type="match status" value="1"/>
</dbReference>
<dbReference type="SUPFAM" id="SSF81383">
    <property type="entry name" value="F-box domain"/>
    <property type="match status" value="1"/>
</dbReference>
<dbReference type="SUPFAM" id="SSF49785">
    <property type="entry name" value="Galactose-binding domain-like"/>
    <property type="match status" value="1"/>
</dbReference>
<dbReference type="PROSITE" id="PS51114">
    <property type="entry name" value="FBA"/>
    <property type="match status" value="1"/>
</dbReference>
<dbReference type="PROSITE" id="PS50181">
    <property type="entry name" value="FBOX"/>
    <property type="match status" value="1"/>
</dbReference>
<organism>
    <name type="scientific">Homo sapiens</name>
    <name type="common">Human</name>
    <dbReference type="NCBI Taxonomy" id="9606"/>
    <lineage>
        <taxon>Eukaryota</taxon>
        <taxon>Metazoa</taxon>
        <taxon>Chordata</taxon>
        <taxon>Craniata</taxon>
        <taxon>Vertebrata</taxon>
        <taxon>Euteleostomi</taxon>
        <taxon>Mammalia</taxon>
        <taxon>Eutheria</taxon>
        <taxon>Euarchontoglires</taxon>
        <taxon>Primates</taxon>
        <taxon>Haplorrhini</taxon>
        <taxon>Catarrhini</taxon>
        <taxon>Hominidae</taxon>
        <taxon>Homo</taxon>
    </lineage>
</organism>
<proteinExistence type="evidence at protein level"/>
<reference key="1">
    <citation type="journal article" date="2002" name="Gene">
        <title>A new subfamily of structurally related human F-box proteins.</title>
        <authorList>
            <person name="Ilyin G.P."/>
            <person name="Serandour A.L."/>
            <person name="Pigeon C."/>
            <person name="Rialland M."/>
            <person name="Glaise D."/>
            <person name="Guguen-Guillouzo C."/>
        </authorList>
    </citation>
    <scope>NUCLEOTIDE SEQUENCE [MRNA]</scope>
    <scope>TISSUE SPECIFICITY</scope>
</reference>
<reference key="2">
    <citation type="journal article" date="2004" name="Nat. Genet.">
        <title>Complete sequencing and characterization of 21,243 full-length human cDNAs.</title>
        <authorList>
            <person name="Ota T."/>
            <person name="Suzuki Y."/>
            <person name="Nishikawa T."/>
            <person name="Otsuki T."/>
            <person name="Sugiyama T."/>
            <person name="Irie R."/>
            <person name="Wakamatsu A."/>
            <person name="Hayashi K."/>
            <person name="Sato H."/>
            <person name="Nagai K."/>
            <person name="Kimura K."/>
            <person name="Makita H."/>
            <person name="Sekine M."/>
            <person name="Obayashi M."/>
            <person name="Nishi T."/>
            <person name="Shibahara T."/>
            <person name="Tanaka T."/>
            <person name="Ishii S."/>
            <person name="Yamamoto J."/>
            <person name="Saito K."/>
            <person name="Kawai Y."/>
            <person name="Isono Y."/>
            <person name="Nakamura Y."/>
            <person name="Nagahari K."/>
            <person name="Murakami K."/>
            <person name="Yasuda T."/>
            <person name="Iwayanagi T."/>
            <person name="Wagatsuma M."/>
            <person name="Shiratori A."/>
            <person name="Sudo H."/>
            <person name="Hosoiri T."/>
            <person name="Kaku Y."/>
            <person name="Kodaira H."/>
            <person name="Kondo H."/>
            <person name="Sugawara M."/>
            <person name="Takahashi M."/>
            <person name="Kanda K."/>
            <person name="Yokoi T."/>
            <person name="Furuya T."/>
            <person name="Kikkawa E."/>
            <person name="Omura Y."/>
            <person name="Abe K."/>
            <person name="Kamihara K."/>
            <person name="Katsuta N."/>
            <person name="Sato K."/>
            <person name="Tanikawa M."/>
            <person name="Yamazaki M."/>
            <person name="Ninomiya K."/>
            <person name="Ishibashi T."/>
            <person name="Yamashita H."/>
            <person name="Murakawa K."/>
            <person name="Fujimori K."/>
            <person name="Tanai H."/>
            <person name="Kimata M."/>
            <person name="Watanabe M."/>
            <person name="Hiraoka S."/>
            <person name="Chiba Y."/>
            <person name="Ishida S."/>
            <person name="Ono Y."/>
            <person name="Takiguchi S."/>
            <person name="Watanabe S."/>
            <person name="Yosida M."/>
            <person name="Hotuta T."/>
            <person name="Kusano J."/>
            <person name="Kanehori K."/>
            <person name="Takahashi-Fujii A."/>
            <person name="Hara H."/>
            <person name="Tanase T.-O."/>
            <person name="Nomura Y."/>
            <person name="Togiya S."/>
            <person name="Komai F."/>
            <person name="Hara R."/>
            <person name="Takeuchi K."/>
            <person name="Arita M."/>
            <person name="Imose N."/>
            <person name="Musashino K."/>
            <person name="Yuuki H."/>
            <person name="Oshima A."/>
            <person name="Sasaki N."/>
            <person name="Aotsuka S."/>
            <person name="Yoshikawa Y."/>
            <person name="Matsunawa H."/>
            <person name="Ichihara T."/>
            <person name="Shiohata N."/>
            <person name="Sano S."/>
            <person name="Moriya S."/>
            <person name="Momiyama H."/>
            <person name="Satoh N."/>
            <person name="Takami S."/>
            <person name="Terashima Y."/>
            <person name="Suzuki O."/>
            <person name="Nakagawa S."/>
            <person name="Senoh A."/>
            <person name="Mizoguchi H."/>
            <person name="Goto Y."/>
            <person name="Shimizu F."/>
            <person name="Wakebe H."/>
            <person name="Hishigaki H."/>
            <person name="Watanabe T."/>
            <person name="Sugiyama A."/>
            <person name="Takemoto M."/>
            <person name="Kawakami B."/>
            <person name="Yamazaki M."/>
            <person name="Watanabe K."/>
            <person name="Kumagai A."/>
            <person name="Itakura S."/>
            <person name="Fukuzumi Y."/>
            <person name="Fujimori Y."/>
            <person name="Komiyama M."/>
            <person name="Tashiro H."/>
            <person name="Tanigami A."/>
            <person name="Fujiwara T."/>
            <person name="Ono T."/>
            <person name="Yamada K."/>
            <person name="Fujii Y."/>
            <person name="Ozaki K."/>
            <person name="Hirao M."/>
            <person name="Ohmori Y."/>
            <person name="Kawabata A."/>
            <person name="Hikiji T."/>
            <person name="Kobatake N."/>
            <person name="Inagaki H."/>
            <person name="Ikema Y."/>
            <person name="Okamoto S."/>
            <person name="Okitani R."/>
            <person name="Kawakami T."/>
            <person name="Noguchi S."/>
            <person name="Itoh T."/>
            <person name="Shigeta K."/>
            <person name="Senba T."/>
            <person name="Matsumura K."/>
            <person name="Nakajima Y."/>
            <person name="Mizuno T."/>
            <person name="Morinaga M."/>
            <person name="Sasaki M."/>
            <person name="Togashi T."/>
            <person name="Oyama M."/>
            <person name="Hata H."/>
            <person name="Watanabe M."/>
            <person name="Komatsu T."/>
            <person name="Mizushima-Sugano J."/>
            <person name="Satoh T."/>
            <person name="Shirai Y."/>
            <person name="Takahashi Y."/>
            <person name="Nakagawa K."/>
            <person name="Okumura K."/>
            <person name="Nagase T."/>
            <person name="Nomura N."/>
            <person name="Kikuchi H."/>
            <person name="Masuho Y."/>
            <person name="Yamashita R."/>
            <person name="Nakai K."/>
            <person name="Yada T."/>
            <person name="Nakamura Y."/>
            <person name="Ohara O."/>
            <person name="Isogai T."/>
            <person name="Sugano S."/>
        </authorList>
    </citation>
    <scope>NUCLEOTIDE SEQUENCE [LARGE SCALE MRNA]</scope>
</reference>
<reference key="3">
    <citation type="journal article" date="2004" name="Genome Res.">
        <title>The status, quality, and expansion of the NIH full-length cDNA project: the Mammalian Gene Collection (MGC).</title>
        <authorList>
            <consortium name="The MGC Project Team"/>
        </authorList>
    </citation>
    <scope>NUCLEOTIDE SEQUENCE [LARGE SCALE MRNA]</scope>
    <source>
        <tissue>Ovary</tissue>
    </source>
</reference>
<reference key="4">
    <citation type="journal article" date="2008" name="J. Biol. Chem.">
        <title>Diversity in tissue expression, substrate binding, and SCF complex formation for a lectin family of ubiquitin ligases.</title>
        <authorList>
            <person name="Glenn K.A."/>
            <person name="Nelson R.F."/>
            <person name="Wen H.M."/>
            <person name="Mallinger A.J."/>
            <person name="Paulson H.L."/>
        </authorList>
    </citation>
    <scope>SUGAR-BINDING</scope>
    <scope>INTERACTION WITH CUL1 AND SKP1</scope>
    <scope>IDENTIFICATION IN SCF-COMPLEX</scope>
    <scope>MUTAGENESIS OF 257-SER-TRP-258</scope>
</reference>
<accession>Q96EF6</accession>
<accession>Q96LQ4</accession>
<evidence type="ECO:0000255" key="1">
    <source>
        <dbReference type="PROSITE-ProRule" id="PRU00080"/>
    </source>
</evidence>
<evidence type="ECO:0000255" key="2">
    <source>
        <dbReference type="PROSITE-ProRule" id="PRU00482"/>
    </source>
</evidence>
<evidence type="ECO:0000269" key="3">
    <source>
    </source>
</evidence>
<evidence type="ECO:0000269" key="4">
    <source>
    </source>
</evidence>
<evidence type="ECO:0000305" key="5"/>
<keyword id="KW-1267">Proteomics identification</keyword>
<keyword id="KW-1185">Reference proteome</keyword>
<keyword id="KW-0833">Ubl conjugation pathway</keyword>
<comment type="function">
    <text>Substrate-recognition component of the SCF (SKP1-CUL1-F-box protein)-type E3 ubiquitin ligase complex. Able to recognize and bind denatured glycoproteins, which are modified with complex-type oligosaccharides. Also recognizes sulfated glycans. Does not bind high-mannose glycoproteins.</text>
</comment>
<comment type="subunit">
    <text evidence="4">Part of a SCF (SKP1-cullin-F-box) protein ligase complex. Interacts with SKP1 and CUL1.</text>
</comment>
<comment type="interaction">
    <interactant intactId="EBI-2510157">
        <id>Q96EF6</id>
    </interactant>
    <interactant intactId="EBI-10173507">
        <id>Q6UY14-3</id>
        <label>ADAMTSL4</label>
    </interactant>
    <organismsDiffer>false</organismsDiffer>
    <experiments>3</experiments>
</comment>
<comment type="interaction">
    <interactant intactId="EBI-2510157">
        <id>Q96EF6</id>
    </interactant>
    <interactant intactId="EBI-11524851">
        <id>Q8NA61-2</id>
        <label>CBY2</label>
    </interactant>
    <organismsDiffer>false</organismsDiffer>
    <experiments>3</experiments>
</comment>
<comment type="interaction">
    <interactant intactId="EBI-2510157">
        <id>Q96EF6</id>
    </interactant>
    <interactant intactId="EBI-979174">
        <id>Q53HL2</id>
        <label>CDCA8</label>
    </interactant>
    <organismsDiffer>false</organismsDiffer>
    <experiments>3</experiments>
</comment>
<comment type="interaction">
    <interactant intactId="EBI-2510157">
        <id>Q96EF6</id>
    </interactant>
    <interactant intactId="EBI-359390">
        <id>Q13616</id>
        <label>CUL1</label>
    </interactant>
    <organismsDiffer>false</organismsDiffer>
    <experiments>10</experiments>
</comment>
<comment type="interaction">
    <interactant intactId="EBI-2510157">
        <id>Q96EF6</id>
    </interactant>
    <interactant intactId="EBI-948630">
        <id>Q86Y13</id>
        <label>DZIP3</label>
    </interactant>
    <organismsDiffer>false</organismsDiffer>
    <experiments>3</experiments>
</comment>
<comment type="interaction">
    <interactant intactId="EBI-2510157">
        <id>Q96EF6</id>
    </interactant>
    <interactant intactId="EBI-12222405">
        <id>Q15056-2</id>
        <label>EIF4H</label>
    </interactant>
    <organismsDiffer>false</organismsDiffer>
    <experiments>3</experiments>
</comment>
<comment type="interaction">
    <interactant intactId="EBI-2510157">
        <id>Q96EF6</id>
    </interactant>
    <interactant intactId="EBI-17181882">
        <id>O75564-2</id>
        <label>JRK</label>
    </interactant>
    <organismsDiffer>false</organismsDiffer>
    <experiments>3</experiments>
</comment>
<comment type="interaction">
    <interactant intactId="EBI-2510157">
        <id>Q96EF6</id>
    </interactant>
    <interactant intactId="EBI-10981970">
        <id>Q5T749</id>
        <label>KPRP</label>
    </interactant>
    <organismsDiffer>false</organismsDiffer>
    <experiments>3</experiments>
</comment>
<comment type="interaction">
    <interactant intactId="EBI-2510157">
        <id>Q96EF6</id>
    </interactant>
    <interactant intactId="EBI-2949715">
        <id>O95678</id>
        <label>KRT75</label>
    </interactant>
    <organismsDiffer>false</organismsDiffer>
    <experiments>3</experiments>
</comment>
<comment type="interaction">
    <interactant intactId="EBI-2510157">
        <id>Q96EF6</id>
    </interactant>
    <interactant intactId="EBI-11953846">
        <id>Q52LG2</id>
        <label>KRTAP13-2</label>
    </interactant>
    <organismsDiffer>false</organismsDiffer>
    <experiments>3</experiments>
</comment>
<comment type="interaction">
    <interactant intactId="EBI-2510157">
        <id>Q96EF6</id>
    </interactant>
    <interactant intactId="EBI-9088686">
        <id>Q14847-2</id>
        <label>LASP1</label>
    </interactant>
    <organismsDiffer>false</organismsDiffer>
    <experiments>5</experiments>
</comment>
<comment type="interaction">
    <interactant intactId="EBI-2510157">
        <id>Q96EF6</id>
    </interactant>
    <interactant intactId="EBI-12270678">
        <id>P29728-2</id>
        <label>OAS2</label>
    </interactant>
    <organismsDiffer>false</organismsDiffer>
    <experiments>3</experiments>
</comment>
<comment type="interaction">
    <interactant intactId="EBI-2510157">
        <id>Q96EF6</id>
    </interactant>
    <interactant intactId="EBI-2860264">
        <id>Q16825</id>
        <label>PTPN21</label>
    </interactant>
    <organismsDiffer>false</organismsDiffer>
    <experiments>3</experiments>
</comment>
<comment type="interaction">
    <interactant intactId="EBI-2510157">
        <id>Q96EF6</id>
    </interactant>
    <interactant intactId="EBI-1049676">
        <id>Q7L804</id>
        <label>RAB11FIP2</label>
    </interactant>
    <organismsDiffer>false</organismsDiffer>
    <experiments>3</experiments>
</comment>
<comment type="interaction">
    <interactant intactId="EBI-2510157">
        <id>Q96EF6</id>
    </interactant>
    <interactant intactId="EBI-12001422">
        <id>Q01196-8</id>
        <label>RUNX1</label>
    </interactant>
    <organismsDiffer>false</organismsDiffer>
    <experiments>3</experiments>
</comment>
<comment type="interaction">
    <interactant intactId="EBI-2510157">
        <id>Q96EF6</id>
    </interactant>
    <interactant intactId="EBI-3957636">
        <id>Q8IYX7</id>
        <label>SAXO1</label>
    </interactant>
    <organismsDiffer>false</organismsDiffer>
    <experiments>3</experiments>
</comment>
<comment type="interaction">
    <interactant intactId="EBI-2510157">
        <id>Q96EF6</id>
    </interactant>
    <interactant intactId="EBI-18394432">
        <id>Q658L1</id>
        <label>SAXO2</label>
    </interactant>
    <organismsDiffer>false</organismsDiffer>
    <experiments>3</experiments>
</comment>
<comment type="interaction">
    <interactant intactId="EBI-2510157">
        <id>Q96EF6</id>
    </interactant>
    <interactant intactId="EBI-307486">
        <id>P63208</id>
        <label>SKP1</label>
    </interactant>
    <organismsDiffer>false</organismsDiffer>
    <experiments>19</experiments>
</comment>
<comment type="interaction">
    <interactant intactId="EBI-2510157">
        <id>Q96EF6</id>
    </interactant>
    <interactant intactId="EBI-11975223">
        <id>Q70EL1-9</id>
        <label>USP54</label>
    </interactant>
    <organismsDiffer>false</organismsDiffer>
    <experiments>3</experiments>
</comment>
<comment type="interaction">
    <interactant intactId="EBI-2510157">
        <id>Q96EF6</id>
    </interactant>
    <interactant intactId="EBI-12838388">
        <id>O14771</id>
        <label>ZNF213</label>
    </interactant>
    <organismsDiffer>false</organismsDiffer>
    <experiments>3</experiments>
</comment>
<comment type="interaction">
    <interactant intactId="EBI-2510157">
        <id>Q96EF6</id>
    </interactant>
    <interactant intactId="EBI-18036029">
        <id>Q3KNS6-3</id>
        <label>ZNF829</label>
    </interactant>
    <organismsDiffer>false</organismsDiffer>
    <experiments>3</experiments>
</comment>
<comment type="interaction">
    <interactant intactId="EBI-2510157">
        <id>Q96EF6</id>
    </interactant>
    <interactant intactId="EBI-751531">
        <id>O15535</id>
        <label>ZSCAN9</label>
    </interactant>
    <organismsDiffer>false</organismsDiffer>
    <experiments>3</experiments>
</comment>
<comment type="tissue specificity">
    <text evidence="3">Expressed in heart, skeletal muscle, liver and kidney. Expressed at lower levels in spleen and brain.</text>
</comment>
<comment type="sequence caution" evidence="5">
    <conflict type="erroneous initiation">
        <sequence resource="EMBL-CDS" id="BAB71616"/>
    </conflict>
</comment>